<gene>
    <name evidence="1" type="primary">murQ</name>
    <name type="ordered locus">SAOUHSC_00157</name>
</gene>
<reference key="1">
    <citation type="book" date="2006" name="Gram positive pathogens, 2nd edition">
        <title>The Staphylococcus aureus NCTC 8325 genome.</title>
        <editorList>
            <person name="Fischetti V."/>
            <person name="Novick R."/>
            <person name="Ferretti J."/>
            <person name="Portnoy D."/>
            <person name="Rood J."/>
        </editorList>
        <authorList>
            <person name="Gillaspy A.F."/>
            <person name="Worrell V."/>
            <person name="Orvis J."/>
            <person name="Roe B.A."/>
            <person name="Dyer D.W."/>
            <person name="Iandolo J.J."/>
        </authorList>
    </citation>
    <scope>NUCLEOTIDE SEQUENCE [LARGE SCALE GENOMIC DNA]</scope>
    <source>
        <strain>NCTC 8325 / PS 47</strain>
    </source>
</reference>
<sequence>MMENSTTEARNEATMHLDEMTVEEALITMNKEDQQVPLAVRKAIPQLTKVIKKTIAQYKKGGRLIYIGAGTSGRLGVLDAAECVPTFNTDPHEIIGIIAGGQHAMTMAVEGAEDHKKLAEEDLKNIDLTSKDVVIGIAASGKTPYVIGGLTFANTIGATTVSISCNEHAVISEIAQYPVEVKVGPEVLTGSTRLKSGTAQKLILNMISTITMVGVGKVYDNLMIDVKATNQKLIDRSVRIIQEICAITYDEAMALYQVSEHDVKVATVMGMCGISKEEATRRLLNNGDIVKRAIRDRQP</sequence>
<dbReference type="EC" id="4.2.1.126" evidence="1"/>
<dbReference type="EMBL" id="CP000253">
    <property type="protein sequence ID" value="ABD29337.1"/>
    <property type="status" value="ALT_INIT"/>
    <property type="molecule type" value="Genomic_DNA"/>
</dbReference>
<dbReference type="RefSeq" id="YP_498756.1">
    <property type="nucleotide sequence ID" value="NC_007795.1"/>
</dbReference>
<dbReference type="SMR" id="Q2G1G6"/>
<dbReference type="STRING" id="93061.SAOUHSC_00157"/>
<dbReference type="PaxDb" id="1280-SAXN108_0177"/>
<dbReference type="GeneID" id="3919865"/>
<dbReference type="KEGG" id="sao:SAOUHSC_00157"/>
<dbReference type="PATRIC" id="fig|93061.5.peg.147"/>
<dbReference type="eggNOG" id="COG2103">
    <property type="taxonomic scope" value="Bacteria"/>
</dbReference>
<dbReference type="HOGENOM" id="CLU_049049_1_1_9"/>
<dbReference type="OrthoDB" id="9813395at2"/>
<dbReference type="UniPathway" id="UPA00342"/>
<dbReference type="Proteomes" id="UP000008816">
    <property type="component" value="Chromosome"/>
</dbReference>
<dbReference type="GO" id="GO:0097367">
    <property type="term" value="F:carbohydrate derivative binding"/>
    <property type="evidence" value="ECO:0007669"/>
    <property type="project" value="InterPro"/>
</dbReference>
<dbReference type="GO" id="GO:0016835">
    <property type="term" value="F:carbon-oxygen lyase activity"/>
    <property type="evidence" value="ECO:0000318"/>
    <property type="project" value="GO_Central"/>
</dbReference>
<dbReference type="GO" id="GO:0016803">
    <property type="term" value="F:ether hydrolase activity"/>
    <property type="evidence" value="ECO:0000318"/>
    <property type="project" value="GO_Central"/>
</dbReference>
<dbReference type="GO" id="GO:0046348">
    <property type="term" value="P:amino sugar catabolic process"/>
    <property type="evidence" value="ECO:0000318"/>
    <property type="project" value="GO_Central"/>
</dbReference>
<dbReference type="GO" id="GO:0097173">
    <property type="term" value="P:N-acetylmuramic acid catabolic process"/>
    <property type="evidence" value="ECO:0007669"/>
    <property type="project" value="UniProtKB-UniPathway"/>
</dbReference>
<dbReference type="GO" id="GO:0009254">
    <property type="term" value="P:peptidoglycan turnover"/>
    <property type="evidence" value="ECO:0000318"/>
    <property type="project" value="GO_Central"/>
</dbReference>
<dbReference type="CDD" id="cd05007">
    <property type="entry name" value="SIS_Etherase"/>
    <property type="match status" value="1"/>
</dbReference>
<dbReference type="FunFam" id="1.10.8.1080:FF:000001">
    <property type="entry name" value="N-acetylmuramic acid 6-phosphate etherase"/>
    <property type="match status" value="1"/>
</dbReference>
<dbReference type="FunFam" id="3.40.50.10490:FF:000014">
    <property type="entry name" value="N-acetylmuramic acid 6-phosphate etherase"/>
    <property type="match status" value="1"/>
</dbReference>
<dbReference type="Gene3D" id="1.10.8.1080">
    <property type="match status" value="1"/>
</dbReference>
<dbReference type="Gene3D" id="3.40.50.10490">
    <property type="entry name" value="Glucose-6-phosphate isomerase like protein, domain 1"/>
    <property type="match status" value="1"/>
</dbReference>
<dbReference type="HAMAP" id="MF_00068">
    <property type="entry name" value="MurQ"/>
    <property type="match status" value="1"/>
</dbReference>
<dbReference type="InterPro" id="IPR005488">
    <property type="entry name" value="Etherase_MurQ"/>
</dbReference>
<dbReference type="InterPro" id="IPR005486">
    <property type="entry name" value="Glucokinase_regulatory_CS"/>
</dbReference>
<dbReference type="InterPro" id="IPR040190">
    <property type="entry name" value="MURQ/GCKR"/>
</dbReference>
<dbReference type="InterPro" id="IPR000408">
    <property type="entry name" value="Reg_chr_condens"/>
</dbReference>
<dbReference type="InterPro" id="IPR001347">
    <property type="entry name" value="SIS_dom"/>
</dbReference>
<dbReference type="InterPro" id="IPR046348">
    <property type="entry name" value="SIS_dom_sf"/>
</dbReference>
<dbReference type="NCBIfam" id="TIGR00274">
    <property type="entry name" value="N-acetylmuramic acid 6-phosphate etherase"/>
    <property type="match status" value="1"/>
</dbReference>
<dbReference type="NCBIfam" id="NF003915">
    <property type="entry name" value="PRK05441.1"/>
    <property type="match status" value="1"/>
</dbReference>
<dbReference type="NCBIfam" id="NF009222">
    <property type="entry name" value="PRK12570.1"/>
    <property type="match status" value="1"/>
</dbReference>
<dbReference type="PANTHER" id="PTHR10088">
    <property type="entry name" value="GLUCOKINASE REGULATORY PROTEIN"/>
    <property type="match status" value="1"/>
</dbReference>
<dbReference type="PANTHER" id="PTHR10088:SF4">
    <property type="entry name" value="GLUCOKINASE REGULATORY PROTEIN"/>
    <property type="match status" value="1"/>
</dbReference>
<dbReference type="Pfam" id="PF22645">
    <property type="entry name" value="GKRP_SIS_N"/>
    <property type="match status" value="1"/>
</dbReference>
<dbReference type="SUPFAM" id="SSF53697">
    <property type="entry name" value="SIS domain"/>
    <property type="match status" value="1"/>
</dbReference>
<dbReference type="PROSITE" id="PS01272">
    <property type="entry name" value="GCKR"/>
    <property type="match status" value="1"/>
</dbReference>
<dbReference type="PROSITE" id="PS51464">
    <property type="entry name" value="SIS"/>
    <property type="match status" value="1"/>
</dbReference>
<proteinExistence type="inferred from homology"/>
<feature type="chain" id="PRO_0000249660" description="N-acetylmuramic acid 6-phosphate etherase">
    <location>
        <begin position="1"/>
        <end position="299"/>
    </location>
</feature>
<feature type="domain" description="SIS" evidence="1">
    <location>
        <begin position="54"/>
        <end position="217"/>
    </location>
</feature>
<feature type="active site" description="Proton donor" evidence="1">
    <location>
        <position position="82"/>
    </location>
</feature>
<feature type="active site" evidence="1">
    <location>
        <position position="113"/>
    </location>
</feature>
<comment type="function">
    <text evidence="1">Specifically catalyzes the cleavage of the D-lactyl ether substituent of MurNAc 6-phosphate, producing GlcNAc 6-phosphate and D-lactate.</text>
</comment>
<comment type="catalytic activity">
    <reaction evidence="1">
        <text>N-acetyl-D-muramate 6-phosphate + H2O = N-acetyl-D-glucosamine 6-phosphate + (R)-lactate</text>
        <dbReference type="Rhea" id="RHEA:26410"/>
        <dbReference type="ChEBI" id="CHEBI:15377"/>
        <dbReference type="ChEBI" id="CHEBI:16004"/>
        <dbReference type="ChEBI" id="CHEBI:57513"/>
        <dbReference type="ChEBI" id="CHEBI:58722"/>
        <dbReference type="EC" id="4.2.1.126"/>
    </reaction>
</comment>
<comment type="pathway">
    <text evidence="1">Amino-sugar metabolism; N-acetylmuramate degradation.</text>
</comment>
<comment type="subunit">
    <text evidence="1">Homodimer.</text>
</comment>
<comment type="miscellaneous">
    <text evidence="1">A lyase-type mechanism (elimination/hydration) is suggested for the cleavage of the lactyl ether bond of MurNAc 6-phosphate, with the formation of an alpha,beta-unsaturated aldehyde intermediate with (E)-stereochemistry, followed by the syn addition of water to give product.</text>
</comment>
<comment type="similarity">
    <text evidence="1">Belongs to the GCKR-like family. MurNAc-6-P etherase subfamily.</text>
</comment>
<comment type="sequence caution" evidence="2">
    <conflict type="erroneous initiation">
        <sequence resource="EMBL-CDS" id="ABD29337"/>
    </conflict>
</comment>
<name>MURQ_STAA8</name>
<protein>
    <recommendedName>
        <fullName evidence="1">N-acetylmuramic acid 6-phosphate etherase</fullName>
        <shortName evidence="1">MurNAc-6-P etherase</shortName>
        <ecNumber evidence="1">4.2.1.126</ecNumber>
    </recommendedName>
    <alternativeName>
        <fullName evidence="1">N-acetylmuramic acid 6-phosphate hydrolase</fullName>
    </alternativeName>
    <alternativeName>
        <fullName evidence="1">N-acetylmuramic acid 6-phosphate lyase</fullName>
    </alternativeName>
</protein>
<accession>Q2G1G6</accession>
<keyword id="KW-0119">Carbohydrate metabolism</keyword>
<keyword id="KW-0456">Lyase</keyword>
<keyword id="KW-1185">Reference proteome</keyword>
<evidence type="ECO:0000255" key="1">
    <source>
        <dbReference type="HAMAP-Rule" id="MF_00068"/>
    </source>
</evidence>
<evidence type="ECO:0000305" key="2"/>
<organism>
    <name type="scientific">Staphylococcus aureus (strain NCTC 8325 / PS 47)</name>
    <dbReference type="NCBI Taxonomy" id="93061"/>
    <lineage>
        <taxon>Bacteria</taxon>
        <taxon>Bacillati</taxon>
        <taxon>Bacillota</taxon>
        <taxon>Bacilli</taxon>
        <taxon>Bacillales</taxon>
        <taxon>Staphylococcaceae</taxon>
        <taxon>Staphylococcus</taxon>
    </lineage>
</organism>